<dbReference type="EC" id="1.6.5.2" evidence="1"/>
<dbReference type="EMBL" id="CP000468">
    <property type="protein sequence ID" value="ABJ02827.1"/>
    <property type="molecule type" value="Genomic_DNA"/>
</dbReference>
<dbReference type="SMR" id="A1AGN7"/>
<dbReference type="KEGG" id="ecv:APECO1_3103"/>
<dbReference type="HOGENOM" id="CLU_058643_0_1_6"/>
<dbReference type="Proteomes" id="UP000008216">
    <property type="component" value="Chromosome"/>
</dbReference>
<dbReference type="GO" id="GO:0005886">
    <property type="term" value="C:plasma membrane"/>
    <property type="evidence" value="ECO:0007669"/>
    <property type="project" value="UniProtKB-SubCell"/>
</dbReference>
<dbReference type="GO" id="GO:0009055">
    <property type="term" value="F:electron transfer activity"/>
    <property type="evidence" value="ECO:0007669"/>
    <property type="project" value="TreeGrafter"/>
</dbReference>
<dbReference type="GO" id="GO:0010181">
    <property type="term" value="F:FMN binding"/>
    <property type="evidence" value="ECO:0007669"/>
    <property type="project" value="TreeGrafter"/>
</dbReference>
<dbReference type="GO" id="GO:0050136">
    <property type="term" value="F:NADH:ubiquinone reductase (non-electrogenic) activity"/>
    <property type="evidence" value="ECO:0007669"/>
    <property type="project" value="RHEA"/>
</dbReference>
<dbReference type="GO" id="GO:0008753">
    <property type="term" value="F:NADPH dehydrogenase (quinone) activity"/>
    <property type="evidence" value="ECO:0007669"/>
    <property type="project" value="RHEA"/>
</dbReference>
<dbReference type="GO" id="GO:1901381">
    <property type="term" value="P:positive regulation of potassium ion transmembrane transport"/>
    <property type="evidence" value="ECO:0007669"/>
    <property type="project" value="UniProtKB-UniRule"/>
</dbReference>
<dbReference type="GO" id="GO:0006813">
    <property type="term" value="P:potassium ion transport"/>
    <property type="evidence" value="ECO:0007669"/>
    <property type="project" value="InterPro"/>
</dbReference>
<dbReference type="FunFam" id="3.40.50.360:FF:000013">
    <property type="entry name" value="Glutathione-regulated potassium-efflux system ancillary protein KefG"/>
    <property type="match status" value="1"/>
</dbReference>
<dbReference type="Gene3D" id="3.40.50.360">
    <property type="match status" value="1"/>
</dbReference>
<dbReference type="HAMAP" id="MF_01415">
    <property type="entry name" value="K_H_efflux_KefG"/>
    <property type="match status" value="1"/>
</dbReference>
<dbReference type="InterPro" id="IPR003680">
    <property type="entry name" value="Flavodoxin_fold"/>
</dbReference>
<dbReference type="InterPro" id="IPR029039">
    <property type="entry name" value="Flavoprotein-like_sf"/>
</dbReference>
<dbReference type="InterPro" id="IPR023947">
    <property type="entry name" value="K_H_efflux_KefG"/>
</dbReference>
<dbReference type="InterPro" id="IPR046980">
    <property type="entry name" value="KefG/KefF"/>
</dbReference>
<dbReference type="NCBIfam" id="NF003430">
    <property type="entry name" value="PRK04930.1"/>
    <property type="match status" value="1"/>
</dbReference>
<dbReference type="PANTHER" id="PTHR47307">
    <property type="entry name" value="GLUTATHIONE-REGULATED POTASSIUM-EFFLUX SYSTEM ANCILLARY PROTEIN KEFG"/>
    <property type="match status" value="1"/>
</dbReference>
<dbReference type="PANTHER" id="PTHR47307:SF1">
    <property type="entry name" value="GLUTATHIONE-REGULATED POTASSIUM-EFFLUX SYSTEM ANCILLARY PROTEIN KEFG"/>
    <property type="match status" value="1"/>
</dbReference>
<dbReference type="Pfam" id="PF02525">
    <property type="entry name" value="Flavodoxin_2"/>
    <property type="match status" value="1"/>
</dbReference>
<dbReference type="SUPFAM" id="SSF52218">
    <property type="entry name" value="Flavoproteins"/>
    <property type="match status" value="1"/>
</dbReference>
<evidence type="ECO:0000255" key="1">
    <source>
        <dbReference type="HAMAP-Rule" id="MF_01415"/>
    </source>
</evidence>
<comment type="function">
    <text evidence="1">Regulatory subunit of a potassium efflux system that confers protection against electrophiles. Required for full activity of KefB.</text>
</comment>
<comment type="catalytic activity">
    <reaction evidence="1">
        <text>a quinone + NADH + H(+) = a quinol + NAD(+)</text>
        <dbReference type="Rhea" id="RHEA:46160"/>
        <dbReference type="ChEBI" id="CHEBI:15378"/>
        <dbReference type="ChEBI" id="CHEBI:24646"/>
        <dbReference type="ChEBI" id="CHEBI:57540"/>
        <dbReference type="ChEBI" id="CHEBI:57945"/>
        <dbReference type="ChEBI" id="CHEBI:132124"/>
        <dbReference type="EC" id="1.6.5.2"/>
    </reaction>
</comment>
<comment type="catalytic activity">
    <reaction evidence="1">
        <text>a quinone + NADPH + H(+) = a quinol + NADP(+)</text>
        <dbReference type="Rhea" id="RHEA:46164"/>
        <dbReference type="ChEBI" id="CHEBI:15378"/>
        <dbReference type="ChEBI" id="CHEBI:24646"/>
        <dbReference type="ChEBI" id="CHEBI:57783"/>
        <dbReference type="ChEBI" id="CHEBI:58349"/>
        <dbReference type="ChEBI" id="CHEBI:132124"/>
        <dbReference type="EC" id="1.6.5.2"/>
    </reaction>
</comment>
<comment type="subunit">
    <text evidence="1">Interacts with KefB.</text>
</comment>
<comment type="subcellular location">
    <subcellularLocation>
        <location evidence="1">Cell inner membrane</location>
        <topology evidence="1">Peripheral membrane protein</topology>
        <orientation evidence="1">Cytoplasmic side</orientation>
    </subcellularLocation>
</comment>
<comment type="similarity">
    <text evidence="1">Belongs to the NAD(P)H dehydrogenase (quinone) family. KefG subfamily.</text>
</comment>
<proteinExistence type="inferred from homology"/>
<gene>
    <name evidence="1" type="primary">kefG</name>
    <name type="ordered locus">Ecok1_33330</name>
    <name type="ORF">APECO1_3103</name>
</gene>
<keyword id="KW-0997">Cell inner membrane</keyword>
<keyword id="KW-1003">Cell membrane</keyword>
<keyword id="KW-0472">Membrane</keyword>
<keyword id="KW-0520">NAD</keyword>
<keyword id="KW-0560">Oxidoreductase</keyword>
<keyword id="KW-1185">Reference proteome</keyword>
<accession>A1AGN7</accession>
<organism>
    <name type="scientific">Escherichia coli O1:K1 / APEC</name>
    <dbReference type="NCBI Taxonomy" id="405955"/>
    <lineage>
        <taxon>Bacteria</taxon>
        <taxon>Pseudomonadati</taxon>
        <taxon>Pseudomonadota</taxon>
        <taxon>Gammaproteobacteria</taxon>
        <taxon>Enterobacterales</taxon>
        <taxon>Enterobacteriaceae</taxon>
        <taxon>Escherichia</taxon>
    </lineage>
</organism>
<sequence length="184" mass="20905">MMSQPAKVLLLYAHPESQDSVANRVLLKPATQLSNVTVHDLYAHYPDFFIDIPREQALLREHEVIVFQHPLYTYSCPALLKEWLDRVLSRGFASGPGGNQLAGKYWRSVITTGEPESAYRYDALNRYPMSDVLRPFELAAGMCRMHWLSPIIIYWARRQSAQELASHARAYGDWLANPLSPGGC</sequence>
<feature type="chain" id="PRO_1000068477" description="Glutathione-regulated potassium-efflux system ancillary protein KefG">
    <location>
        <begin position="1"/>
        <end position="184"/>
    </location>
</feature>
<reference key="1">
    <citation type="journal article" date="2007" name="J. Bacteriol.">
        <title>The genome sequence of avian pathogenic Escherichia coli strain O1:K1:H7 shares strong similarities with human extraintestinal pathogenic E. coli genomes.</title>
        <authorList>
            <person name="Johnson T.J."/>
            <person name="Kariyawasam S."/>
            <person name="Wannemuehler Y."/>
            <person name="Mangiamele P."/>
            <person name="Johnson S.J."/>
            <person name="Doetkott C."/>
            <person name="Skyberg J.A."/>
            <person name="Lynne A.M."/>
            <person name="Johnson J.R."/>
            <person name="Nolan L.K."/>
        </authorList>
    </citation>
    <scope>NUCLEOTIDE SEQUENCE [LARGE SCALE GENOMIC DNA]</scope>
</reference>
<name>KEFG_ECOK1</name>
<protein>
    <recommendedName>
        <fullName evidence="1">Glutathione-regulated potassium-efflux system ancillary protein KefG</fullName>
    </recommendedName>
    <alternativeName>
        <fullName evidence="1">Putative quinone oxidoreductase KefG</fullName>
        <ecNumber evidence="1">1.6.5.2</ecNumber>
    </alternativeName>
</protein>